<organism>
    <name type="scientific">Homo sapiens</name>
    <name type="common">Human</name>
    <dbReference type="NCBI Taxonomy" id="9606"/>
    <lineage>
        <taxon>Eukaryota</taxon>
        <taxon>Metazoa</taxon>
        <taxon>Chordata</taxon>
        <taxon>Craniata</taxon>
        <taxon>Vertebrata</taxon>
        <taxon>Euteleostomi</taxon>
        <taxon>Mammalia</taxon>
        <taxon>Eutheria</taxon>
        <taxon>Euarchontoglires</taxon>
        <taxon>Primates</taxon>
        <taxon>Haplorrhini</taxon>
        <taxon>Catarrhini</taxon>
        <taxon>Hominidae</taxon>
        <taxon>Homo</taxon>
    </lineage>
</organism>
<gene>
    <name type="primary">OR52B2</name>
</gene>
<dbReference type="EMBL" id="AB065763">
    <property type="protein sequence ID" value="BAC05983.1"/>
    <property type="molecule type" value="Genomic_DNA"/>
</dbReference>
<dbReference type="EMBL" id="CH471064">
    <property type="protein sequence ID" value="EAW68744.1"/>
    <property type="molecule type" value="Genomic_DNA"/>
</dbReference>
<dbReference type="EMBL" id="BC136732">
    <property type="protein sequence ID" value="AAI36733.1"/>
    <property type="molecule type" value="mRNA"/>
</dbReference>
<dbReference type="EMBL" id="BC136733">
    <property type="protein sequence ID" value="AAI36734.1"/>
    <property type="molecule type" value="mRNA"/>
</dbReference>
<dbReference type="EMBL" id="AF399505">
    <property type="protein sequence ID" value="AAK94990.1"/>
    <property type="molecule type" value="Genomic_DNA"/>
</dbReference>
<dbReference type="EMBL" id="BK004324">
    <property type="protein sequence ID" value="DAA04722.1"/>
    <property type="molecule type" value="Genomic_DNA"/>
</dbReference>
<dbReference type="CCDS" id="CCDS53598.1"/>
<dbReference type="RefSeq" id="NP_001004052.1">
    <property type="nucleotide sequence ID" value="NM_001004052.1"/>
</dbReference>
<dbReference type="SMR" id="Q96RD2"/>
<dbReference type="BioGRID" id="129115">
    <property type="interactions" value="20"/>
</dbReference>
<dbReference type="FunCoup" id="Q96RD2">
    <property type="interactions" value="470"/>
</dbReference>
<dbReference type="IntAct" id="Q96RD2">
    <property type="interactions" value="18"/>
</dbReference>
<dbReference type="STRING" id="9606.ENSP00000432011"/>
<dbReference type="GlyCosmos" id="Q96RD2">
    <property type="glycosylation" value="1 site, No reported glycans"/>
</dbReference>
<dbReference type="GlyGen" id="Q96RD2">
    <property type="glycosylation" value="1 site"/>
</dbReference>
<dbReference type="iPTMnet" id="Q96RD2"/>
<dbReference type="PhosphoSitePlus" id="Q96RD2"/>
<dbReference type="BioMuta" id="OR52B2"/>
<dbReference type="DMDM" id="221222519"/>
<dbReference type="MassIVE" id="Q96RD2"/>
<dbReference type="PaxDb" id="9606-ENSP00000432011"/>
<dbReference type="Antibodypedia" id="57973">
    <property type="antibodies" value="63 antibodies from 19 providers"/>
</dbReference>
<dbReference type="DNASU" id="255725"/>
<dbReference type="Ensembl" id="ENST00000530810.2">
    <property type="protein sequence ID" value="ENSP00000432011.1"/>
    <property type="gene ID" value="ENSG00000255307.2"/>
</dbReference>
<dbReference type="GeneID" id="255725"/>
<dbReference type="KEGG" id="hsa:255725"/>
<dbReference type="MANE-Select" id="ENST00000530810.2">
    <property type="protein sequence ID" value="ENSP00000432011.1"/>
    <property type="RefSeq nucleotide sequence ID" value="NM_001004052.1"/>
    <property type="RefSeq protein sequence ID" value="NP_001004052.1"/>
</dbReference>
<dbReference type="UCSC" id="uc010qzy.3">
    <property type="organism name" value="human"/>
</dbReference>
<dbReference type="AGR" id="HGNC:15207"/>
<dbReference type="CTD" id="255725"/>
<dbReference type="GeneCards" id="OR52B2"/>
<dbReference type="HGNC" id="HGNC:15207">
    <property type="gene designation" value="OR52B2"/>
</dbReference>
<dbReference type="HPA" id="ENSG00000255307">
    <property type="expression patterns" value="Not detected"/>
</dbReference>
<dbReference type="neXtProt" id="NX_Q96RD2"/>
<dbReference type="PharmGKB" id="PA32396"/>
<dbReference type="VEuPathDB" id="HostDB:ENSG00000255307"/>
<dbReference type="eggNOG" id="ENOG502QV28">
    <property type="taxonomic scope" value="Eukaryota"/>
</dbReference>
<dbReference type="GeneTree" id="ENSGT01090000260043"/>
<dbReference type="HOGENOM" id="CLU_012526_0_0_1"/>
<dbReference type="InParanoid" id="Q96RD2"/>
<dbReference type="OMA" id="CIMTHTN"/>
<dbReference type="OrthoDB" id="5969463at2759"/>
<dbReference type="PAN-GO" id="Q96RD2">
    <property type="GO annotations" value="0 GO annotations based on evolutionary models"/>
</dbReference>
<dbReference type="PhylomeDB" id="Q96RD2"/>
<dbReference type="TreeFam" id="TF343679"/>
<dbReference type="PathwayCommons" id="Q96RD2"/>
<dbReference type="Reactome" id="R-HSA-9752946">
    <property type="pathway name" value="Expression and translocation of olfactory receptors"/>
</dbReference>
<dbReference type="BioGRID-ORCS" id="255725">
    <property type="hits" value="15 hits in 756 CRISPR screens"/>
</dbReference>
<dbReference type="GeneWiki" id="OR52B2"/>
<dbReference type="GenomeRNAi" id="255725"/>
<dbReference type="Pharos" id="Q96RD2">
    <property type="development level" value="Tdark"/>
</dbReference>
<dbReference type="PRO" id="PR:Q96RD2"/>
<dbReference type="Proteomes" id="UP000005640">
    <property type="component" value="Chromosome 11"/>
</dbReference>
<dbReference type="RNAct" id="Q96RD2">
    <property type="molecule type" value="protein"/>
</dbReference>
<dbReference type="Bgee" id="ENSG00000255307">
    <property type="expression patterns" value="Expressed in primordial germ cell in gonad and 1 other cell type or tissue"/>
</dbReference>
<dbReference type="GO" id="GO:0005886">
    <property type="term" value="C:plasma membrane"/>
    <property type="evidence" value="ECO:0000318"/>
    <property type="project" value="GO_Central"/>
</dbReference>
<dbReference type="GO" id="GO:0004930">
    <property type="term" value="F:G protein-coupled receptor activity"/>
    <property type="evidence" value="ECO:0007669"/>
    <property type="project" value="UniProtKB-KW"/>
</dbReference>
<dbReference type="GO" id="GO:0004984">
    <property type="term" value="F:olfactory receptor activity"/>
    <property type="evidence" value="ECO:0000318"/>
    <property type="project" value="GO_Central"/>
</dbReference>
<dbReference type="CDD" id="cd15221">
    <property type="entry name" value="7tmA_OR52B-like"/>
    <property type="match status" value="1"/>
</dbReference>
<dbReference type="FunFam" id="1.20.1070.10:FF:000006">
    <property type="entry name" value="Olfactory receptor"/>
    <property type="match status" value="1"/>
</dbReference>
<dbReference type="Gene3D" id="1.20.1070.10">
    <property type="entry name" value="Rhodopsin 7-helix transmembrane proteins"/>
    <property type="match status" value="1"/>
</dbReference>
<dbReference type="InterPro" id="IPR000276">
    <property type="entry name" value="GPCR_Rhodpsn"/>
</dbReference>
<dbReference type="InterPro" id="IPR017452">
    <property type="entry name" value="GPCR_Rhodpsn_7TM"/>
</dbReference>
<dbReference type="InterPro" id="IPR000725">
    <property type="entry name" value="Olfact_rcpt"/>
</dbReference>
<dbReference type="InterPro" id="IPR050402">
    <property type="entry name" value="OR51/52/56-like"/>
</dbReference>
<dbReference type="PANTHER" id="PTHR26450:SF151">
    <property type="entry name" value="OLFACTORY RECEPTOR 52B2"/>
    <property type="match status" value="1"/>
</dbReference>
<dbReference type="PANTHER" id="PTHR26450">
    <property type="entry name" value="OLFACTORY RECEPTOR 56B1-RELATED"/>
    <property type="match status" value="1"/>
</dbReference>
<dbReference type="Pfam" id="PF13853">
    <property type="entry name" value="7tm_4"/>
    <property type="match status" value="1"/>
</dbReference>
<dbReference type="PRINTS" id="PR00237">
    <property type="entry name" value="GPCRRHODOPSN"/>
</dbReference>
<dbReference type="PRINTS" id="PR00245">
    <property type="entry name" value="OLFACTORYR"/>
</dbReference>
<dbReference type="SUPFAM" id="SSF81321">
    <property type="entry name" value="Family A G protein-coupled receptor-like"/>
    <property type="match status" value="1"/>
</dbReference>
<dbReference type="PROSITE" id="PS00237">
    <property type="entry name" value="G_PROTEIN_RECEP_F1_1"/>
    <property type="match status" value="1"/>
</dbReference>
<dbReference type="PROSITE" id="PS50262">
    <property type="entry name" value="G_PROTEIN_RECEP_F1_2"/>
    <property type="match status" value="1"/>
</dbReference>
<name>O52B2_HUMAN</name>
<feature type="chain" id="PRO_0000150767" description="Olfactory receptor 52B2">
    <location>
        <begin position="1"/>
        <end position="323"/>
    </location>
</feature>
<feature type="topological domain" description="Extracellular" evidence="1">
    <location>
        <begin position="1"/>
        <end position="27"/>
    </location>
</feature>
<feature type="transmembrane region" description="Helical; Name=1" evidence="1">
    <location>
        <begin position="28"/>
        <end position="48"/>
    </location>
</feature>
<feature type="topological domain" description="Cytoplasmic" evidence="1">
    <location>
        <begin position="49"/>
        <end position="56"/>
    </location>
</feature>
<feature type="transmembrane region" description="Helical; Name=2" evidence="1">
    <location>
        <begin position="57"/>
        <end position="77"/>
    </location>
</feature>
<feature type="topological domain" description="Extracellular" evidence="1">
    <location>
        <begin position="78"/>
        <end position="101"/>
    </location>
</feature>
<feature type="transmembrane region" description="Helical; Name=3" evidence="1">
    <location>
        <begin position="102"/>
        <end position="122"/>
    </location>
</feature>
<feature type="topological domain" description="Cytoplasmic" evidence="1">
    <location>
        <begin position="123"/>
        <end position="141"/>
    </location>
</feature>
<feature type="transmembrane region" description="Helical; Name=4" evidence="1">
    <location>
        <begin position="142"/>
        <end position="162"/>
    </location>
</feature>
<feature type="topological domain" description="Extracellular" evidence="1">
    <location>
        <begin position="163"/>
        <end position="198"/>
    </location>
</feature>
<feature type="transmembrane region" description="Helical; Name=5" evidence="1">
    <location>
        <begin position="199"/>
        <end position="219"/>
    </location>
</feature>
<feature type="topological domain" description="Cytoplasmic" evidence="1">
    <location>
        <begin position="220"/>
        <end position="239"/>
    </location>
</feature>
<feature type="transmembrane region" description="Helical; Name=6" evidence="1">
    <location>
        <begin position="240"/>
        <end position="260"/>
    </location>
</feature>
<feature type="topological domain" description="Extracellular" evidence="1">
    <location>
        <begin position="261"/>
        <end position="275"/>
    </location>
</feature>
<feature type="transmembrane region" description="Helical; Name=7" evidence="1">
    <location>
        <begin position="276"/>
        <end position="296"/>
    </location>
</feature>
<feature type="topological domain" description="Cytoplasmic" evidence="1">
    <location>
        <begin position="297"/>
        <end position="323"/>
    </location>
</feature>
<feature type="glycosylation site" description="N-linked (GlcNAc...) asparagine" evidence="1">
    <location>
        <position position="5"/>
    </location>
</feature>
<feature type="disulfide bond" evidence="2">
    <location>
        <begin position="99"/>
        <end position="191"/>
    </location>
</feature>
<feature type="sequence variant" id="VAR_054126" description="In dbSNP:rs16909422.">
    <original>F</original>
    <variation>Y</variation>
    <location>
        <position position="105"/>
    </location>
</feature>
<proteinExistence type="evidence at transcript level"/>
<sequence length="323" mass="36185">MSHTNVTIFHPAVFVLPGIPGLEAYHIWLSIPLCLIYITAVLGNSILIVVIVMERNLHVPMYFFLSMLAVMDILLSTTTVPKALAIFWLQAHNIAFDACVTQGFFVHMMFVGESAILLAMAFDRFVAICAPLRYTTVLTWPVVGRIALAVITRSFCIIFPVIFLLKRLPFCLTNIVPHSYCEHIGVARLACADITVNIWYGFSVPIVMVILDVILIAVSYSLILRAVFRLPSQDARHKALSTCGSHLCVILMFYVPSFFTLLTHHFGRNIPQHVHILLANLYVAVPPMLNPIVYGVKTKQIREGVAHRFFDIKTWCCTSPLGS</sequence>
<reference key="1">
    <citation type="submission" date="2001-07" db="EMBL/GenBank/DDBJ databases">
        <title>Genome-wide discovery and analysis of human seven transmembrane helix receptor genes.</title>
        <authorList>
            <person name="Suwa M."/>
            <person name="Sato T."/>
            <person name="Okouchi I."/>
            <person name="Arita M."/>
            <person name="Futami K."/>
            <person name="Matsumoto S."/>
            <person name="Tsutsumi S."/>
            <person name="Aburatani H."/>
            <person name="Asai K."/>
            <person name="Akiyama Y."/>
        </authorList>
    </citation>
    <scope>NUCLEOTIDE SEQUENCE [GENOMIC DNA]</scope>
</reference>
<reference key="2">
    <citation type="submission" date="2005-09" db="EMBL/GenBank/DDBJ databases">
        <authorList>
            <person name="Mural R.J."/>
            <person name="Istrail S."/>
            <person name="Sutton G.G."/>
            <person name="Florea L."/>
            <person name="Halpern A.L."/>
            <person name="Mobarry C.M."/>
            <person name="Lippert R."/>
            <person name="Walenz B."/>
            <person name="Shatkay H."/>
            <person name="Dew I."/>
            <person name="Miller J.R."/>
            <person name="Flanigan M.J."/>
            <person name="Edwards N.J."/>
            <person name="Bolanos R."/>
            <person name="Fasulo D."/>
            <person name="Halldorsson B.V."/>
            <person name="Hannenhalli S."/>
            <person name="Turner R."/>
            <person name="Yooseph S."/>
            <person name="Lu F."/>
            <person name="Nusskern D.R."/>
            <person name="Shue B.C."/>
            <person name="Zheng X.H."/>
            <person name="Zhong F."/>
            <person name="Delcher A.L."/>
            <person name="Huson D.H."/>
            <person name="Kravitz S.A."/>
            <person name="Mouchard L."/>
            <person name="Reinert K."/>
            <person name="Remington K.A."/>
            <person name="Clark A.G."/>
            <person name="Waterman M.S."/>
            <person name="Eichler E.E."/>
            <person name="Adams M.D."/>
            <person name="Hunkapiller M.W."/>
            <person name="Myers E.W."/>
            <person name="Venter J.C."/>
        </authorList>
    </citation>
    <scope>NUCLEOTIDE SEQUENCE [LARGE SCALE GENOMIC DNA]</scope>
</reference>
<reference key="3">
    <citation type="journal article" date="2004" name="Genome Res.">
        <title>The status, quality, and expansion of the NIH full-length cDNA project: the Mammalian Gene Collection (MGC).</title>
        <authorList>
            <consortium name="The MGC Project Team"/>
        </authorList>
    </citation>
    <scope>NUCLEOTIDE SEQUENCE [LARGE SCALE MRNA]</scope>
    <source>
        <tissue>Brain</tissue>
    </source>
</reference>
<reference key="4">
    <citation type="journal article" date="2002" name="Genomics">
        <title>DEFOG: a practical scheme for deciphering families of genes.</title>
        <authorList>
            <person name="Fuchs T."/>
            <person name="Malecova B."/>
            <person name="Linhart C."/>
            <person name="Sharan R."/>
            <person name="Khen M."/>
            <person name="Herwig R."/>
            <person name="Shmulevich D."/>
            <person name="Elkon R."/>
            <person name="Steinfath M."/>
            <person name="O'Brien J.K."/>
            <person name="Radelof U."/>
            <person name="Lehrach H."/>
            <person name="Lancet D."/>
            <person name="Shamir R."/>
        </authorList>
    </citation>
    <scope>NUCLEOTIDE SEQUENCE [GENOMIC DNA] OF 70-287</scope>
</reference>
<reference key="5">
    <citation type="journal article" date="2004" name="Proc. Natl. Acad. Sci. U.S.A.">
        <title>The human olfactory receptor gene family.</title>
        <authorList>
            <person name="Malnic B."/>
            <person name="Godfrey P.A."/>
            <person name="Buck L.B."/>
        </authorList>
    </citation>
    <scope>IDENTIFICATION</scope>
</reference>
<reference key="6">
    <citation type="journal article" date="2004" name="Proc. Natl. Acad. Sci. U.S.A.">
        <authorList>
            <person name="Malnic B."/>
            <person name="Godfrey P.A."/>
            <person name="Buck L.B."/>
        </authorList>
    </citation>
    <scope>ERRATUM OF PUBMED:14983052</scope>
</reference>
<keyword id="KW-1003">Cell membrane</keyword>
<keyword id="KW-1015">Disulfide bond</keyword>
<keyword id="KW-0297">G-protein coupled receptor</keyword>
<keyword id="KW-0325">Glycoprotein</keyword>
<keyword id="KW-0472">Membrane</keyword>
<keyword id="KW-0552">Olfaction</keyword>
<keyword id="KW-0675">Receptor</keyword>
<keyword id="KW-1185">Reference proteome</keyword>
<keyword id="KW-0716">Sensory transduction</keyword>
<keyword id="KW-0807">Transducer</keyword>
<keyword id="KW-0812">Transmembrane</keyword>
<keyword id="KW-1133">Transmembrane helix</keyword>
<comment type="function">
    <text evidence="3">Odorant receptor.</text>
</comment>
<comment type="subcellular location">
    <subcellularLocation>
        <location>Cell membrane</location>
        <topology>Multi-pass membrane protein</topology>
    </subcellularLocation>
</comment>
<comment type="similarity">
    <text evidence="2">Belongs to the G-protein coupled receptor 1 family.</text>
</comment>
<comment type="online information" name="Human Olfactory Receptor Data Exploratorium (HORDE)">
    <link uri="http://genome.weizmann.ac.il/horde/card/index/symbol:OR52B2"/>
</comment>
<accession>Q96RD2</accession>
<accession>Q8NGM7</accession>
<evidence type="ECO:0000255" key="1"/>
<evidence type="ECO:0000255" key="2">
    <source>
        <dbReference type="PROSITE-ProRule" id="PRU00521"/>
    </source>
</evidence>
<evidence type="ECO:0000305" key="3"/>
<protein>
    <recommendedName>
        <fullName>Olfactory receptor 52B2</fullName>
    </recommendedName>
    <alternativeName>
        <fullName>Olfactory receptor OR11-70</fullName>
    </alternativeName>
</protein>